<accession>Q9FLP7</accession>
<evidence type="ECO:0000305" key="1"/>
<keyword id="KW-1185">Reference proteome</keyword>
<reference key="1">
    <citation type="journal article" date="1998" name="DNA Res.">
        <title>Structural analysis of Arabidopsis thaliana chromosome 5. IV. Sequence features of the regions of 1,456,315 bp covered by nineteen physically assigned P1 and TAC clones.</title>
        <authorList>
            <person name="Sato S."/>
            <person name="Kaneko T."/>
            <person name="Kotani H."/>
            <person name="Nakamura Y."/>
            <person name="Asamizu E."/>
            <person name="Miyajima N."/>
            <person name="Tabata S."/>
        </authorList>
    </citation>
    <scope>NUCLEOTIDE SEQUENCE [LARGE SCALE GENOMIC DNA]</scope>
    <source>
        <strain>cv. Columbia</strain>
    </source>
</reference>
<reference key="2">
    <citation type="journal article" date="2017" name="Plant J.">
        <title>Araport11: a complete reannotation of the Arabidopsis thaliana reference genome.</title>
        <authorList>
            <person name="Cheng C.Y."/>
            <person name="Krishnakumar V."/>
            <person name="Chan A.P."/>
            <person name="Thibaud-Nissen F."/>
            <person name="Schobel S."/>
            <person name="Town C.D."/>
        </authorList>
    </citation>
    <scope>GENOME REANNOTATION</scope>
    <source>
        <strain>cv. Columbia</strain>
    </source>
</reference>
<dbReference type="EMBL" id="AB010071">
    <property type="protein sequence ID" value="BAB08584.1"/>
    <property type="status" value="ALT_SEQ"/>
    <property type="molecule type" value="Genomic_DNA"/>
</dbReference>
<dbReference type="EMBL" id="CP002688">
    <property type="protein sequence ID" value="AED96592.1"/>
    <property type="molecule type" value="Genomic_DNA"/>
</dbReference>
<dbReference type="RefSeq" id="NP_200326.2">
    <property type="nucleotide sequence ID" value="NM_124897.3"/>
</dbReference>
<dbReference type="STRING" id="3702.Q9FLP7"/>
<dbReference type="PaxDb" id="3702-AT5G55150.1"/>
<dbReference type="ProteomicsDB" id="230647"/>
<dbReference type="EnsemblPlants" id="AT5G55150.1">
    <property type="protein sequence ID" value="AT5G55150.1"/>
    <property type="gene ID" value="AT5G55150"/>
</dbReference>
<dbReference type="GeneID" id="835608"/>
<dbReference type="Gramene" id="AT5G55150.1">
    <property type="protein sequence ID" value="AT5G55150.1"/>
    <property type="gene ID" value="AT5G55150"/>
</dbReference>
<dbReference type="KEGG" id="ath:AT5G55150"/>
<dbReference type="Araport" id="AT5G55150"/>
<dbReference type="TAIR" id="AT5G55150">
    <property type="gene designation" value="ATFDR2"/>
</dbReference>
<dbReference type="eggNOG" id="ENOG502QS0H">
    <property type="taxonomic scope" value="Eukaryota"/>
</dbReference>
<dbReference type="HOGENOM" id="CLU_019286_1_2_1"/>
<dbReference type="InParanoid" id="Q9FLP7"/>
<dbReference type="OMA" id="YEVDMVA"/>
<dbReference type="PhylomeDB" id="Q9FLP7"/>
<dbReference type="PRO" id="PR:Q9FLP7"/>
<dbReference type="Proteomes" id="UP000006548">
    <property type="component" value="Chromosome 5"/>
</dbReference>
<dbReference type="ExpressionAtlas" id="Q9FLP7">
    <property type="expression patterns" value="baseline and differential"/>
</dbReference>
<dbReference type="Gene3D" id="1.20.1280.50">
    <property type="match status" value="1"/>
</dbReference>
<dbReference type="InterPro" id="IPR036047">
    <property type="entry name" value="F-box-like_dom_sf"/>
</dbReference>
<dbReference type="InterPro" id="IPR050942">
    <property type="entry name" value="F-box_BR-signaling"/>
</dbReference>
<dbReference type="InterPro" id="IPR001810">
    <property type="entry name" value="F-box_dom"/>
</dbReference>
<dbReference type="InterPro" id="IPR005174">
    <property type="entry name" value="KIB1-4_b-propeller"/>
</dbReference>
<dbReference type="InterPro" id="IPR011044">
    <property type="entry name" value="Quino_amine_DH_bsu"/>
</dbReference>
<dbReference type="PANTHER" id="PTHR44259:SF111">
    <property type="entry name" value="OS04G0167600 PROTEIN"/>
    <property type="match status" value="1"/>
</dbReference>
<dbReference type="PANTHER" id="PTHR44259">
    <property type="entry name" value="OS07G0183000 PROTEIN-RELATED"/>
    <property type="match status" value="1"/>
</dbReference>
<dbReference type="Pfam" id="PF03478">
    <property type="entry name" value="Beta-prop_KIB1-4"/>
    <property type="match status" value="1"/>
</dbReference>
<dbReference type="Pfam" id="PF12937">
    <property type="entry name" value="F-box-like"/>
    <property type="match status" value="1"/>
</dbReference>
<dbReference type="SUPFAM" id="SSF81383">
    <property type="entry name" value="F-box domain"/>
    <property type="match status" value="1"/>
</dbReference>
<dbReference type="SUPFAM" id="SSF50969">
    <property type="entry name" value="YVTN repeat-like/Quinoprotein amine dehydrogenase"/>
    <property type="match status" value="1"/>
</dbReference>
<feature type="chain" id="PRO_0000283560" description="Putative F-box protein At5g55150">
    <location>
        <begin position="1"/>
        <end position="360"/>
    </location>
</feature>
<feature type="domain" description="F-box">
    <location>
        <begin position="6"/>
        <end position="54"/>
    </location>
</feature>
<proteinExistence type="predicted"/>
<sequence length="360" mass="40832">MALPSSSWSEFLPELLNTVFHNLNDARDILNCATVCSSWKDSSSAVYYSRTFSPFLFISHLSSNEEIRFSDQFRVLSPGKLGFSGNQQAWVCGSTLGFLLTKPVTKSVTSLPPLISFEDVQRLLQSQAIIPDSEALKNFIKKAVSSTSLLDDEWVVLVIYNTDRKLAFCRRGDKQWTDLESVASSVDDIVFCNGVFFAIDRLGEIYHCELSANNPKATPLCSTSPFRYDSCKKYLAESDYDELWVVLKKLELNDDCDFETSFEIYEFNRETNEWTKVMSLRGKALFLSPQGRCIAVLAGERGFFKDNSVYFIDGDDPSVGGSGPQNLSVFEWESKQIMKIYQPRSWNCQMFWVTPTDVPQ</sequence>
<comment type="sequence caution" evidence="1">
    <conflict type="erroneous gene model prediction">
        <sequence resource="EMBL-CDS" id="BAB08584"/>
    </conflict>
</comment>
<gene>
    <name type="ordered locus">At5g55150</name>
    <name type="ORF">MCO15.10</name>
</gene>
<name>FB294_ARATH</name>
<protein>
    <recommendedName>
        <fullName>Putative F-box protein At5g55150</fullName>
    </recommendedName>
</protein>
<organism>
    <name type="scientific">Arabidopsis thaliana</name>
    <name type="common">Mouse-ear cress</name>
    <dbReference type="NCBI Taxonomy" id="3702"/>
    <lineage>
        <taxon>Eukaryota</taxon>
        <taxon>Viridiplantae</taxon>
        <taxon>Streptophyta</taxon>
        <taxon>Embryophyta</taxon>
        <taxon>Tracheophyta</taxon>
        <taxon>Spermatophyta</taxon>
        <taxon>Magnoliopsida</taxon>
        <taxon>eudicotyledons</taxon>
        <taxon>Gunneridae</taxon>
        <taxon>Pentapetalae</taxon>
        <taxon>rosids</taxon>
        <taxon>malvids</taxon>
        <taxon>Brassicales</taxon>
        <taxon>Brassicaceae</taxon>
        <taxon>Camelineae</taxon>
        <taxon>Arabidopsis</taxon>
    </lineage>
</organism>